<proteinExistence type="inferred from homology"/>
<keyword id="KW-0028">Amino-acid biosynthesis</keyword>
<keyword id="KW-0057">Aromatic amino acid biosynthesis</keyword>
<keyword id="KW-0067">ATP-binding</keyword>
<keyword id="KW-0963">Cytoplasm</keyword>
<keyword id="KW-0418">Kinase</keyword>
<keyword id="KW-0460">Magnesium</keyword>
<keyword id="KW-0479">Metal-binding</keyword>
<keyword id="KW-0547">Nucleotide-binding</keyword>
<keyword id="KW-0808">Transferase</keyword>
<reference key="1">
    <citation type="submission" date="2007-08" db="EMBL/GenBank/DDBJ databases">
        <authorList>
            <consortium name="The Vibrio harveyi Genome Sequencing Project"/>
            <person name="Bassler B."/>
            <person name="Clifton S.W."/>
            <person name="Fulton L."/>
            <person name="Delehaunty K."/>
            <person name="Fronick C."/>
            <person name="Harrison M."/>
            <person name="Markivic C."/>
            <person name="Fulton R."/>
            <person name="Tin-Wollam A.-M."/>
            <person name="Shah N."/>
            <person name="Pepin K."/>
            <person name="Nash W."/>
            <person name="Thiruvilangam P."/>
            <person name="Bhonagiri V."/>
            <person name="Waters C."/>
            <person name="Tu K.C."/>
            <person name="Irgon J."/>
            <person name="Wilson R.K."/>
        </authorList>
    </citation>
    <scope>NUCLEOTIDE SEQUENCE [LARGE SCALE GENOMIC DNA]</scope>
    <source>
        <strain>ATCC BAA-1116 / BB120</strain>
    </source>
</reference>
<organism>
    <name type="scientific">Vibrio campbellii (strain ATCC BAA-1116)</name>
    <dbReference type="NCBI Taxonomy" id="2902295"/>
    <lineage>
        <taxon>Bacteria</taxon>
        <taxon>Pseudomonadati</taxon>
        <taxon>Pseudomonadota</taxon>
        <taxon>Gammaproteobacteria</taxon>
        <taxon>Vibrionales</taxon>
        <taxon>Vibrionaceae</taxon>
        <taxon>Vibrio</taxon>
    </lineage>
</organism>
<protein>
    <recommendedName>
        <fullName evidence="1">Shikimate kinase</fullName>
        <shortName evidence="1">SK</shortName>
        <ecNumber evidence="1">2.7.1.71</ecNumber>
    </recommendedName>
</protein>
<feature type="chain" id="PRO_1000023005" description="Shikimate kinase">
    <location>
        <begin position="1"/>
        <end position="172"/>
    </location>
</feature>
<feature type="binding site" evidence="1">
    <location>
        <begin position="14"/>
        <end position="19"/>
    </location>
    <ligand>
        <name>ATP</name>
        <dbReference type="ChEBI" id="CHEBI:30616"/>
    </ligand>
</feature>
<feature type="binding site" evidence="1">
    <location>
        <position position="18"/>
    </location>
    <ligand>
        <name>Mg(2+)</name>
        <dbReference type="ChEBI" id="CHEBI:18420"/>
    </ligand>
</feature>
<feature type="binding site" evidence="1">
    <location>
        <position position="36"/>
    </location>
    <ligand>
        <name>substrate</name>
    </ligand>
</feature>
<feature type="binding site" evidence="1">
    <location>
        <position position="60"/>
    </location>
    <ligand>
        <name>substrate</name>
    </ligand>
</feature>
<feature type="binding site" evidence="1">
    <location>
        <position position="82"/>
    </location>
    <ligand>
        <name>substrate</name>
    </ligand>
</feature>
<feature type="binding site" evidence="1">
    <location>
        <position position="120"/>
    </location>
    <ligand>
        <name>ATP</name>
        <dbReference type="ChEBI" id="CHEBI:30616"/>
    </ligand>
</feature>
<feature type="binding site" evidence="1">
    <location>
        <position position="139"/>
    </location>
    <ligand>
        <name>substrate</name>
    </ligand>
</feature>
<feature type="binding site" evidence="1">
    <location>
        <position position="156"/>
    </location>
    <ligand>
        <name>ATP</name>
        <dbReference type="ChEBI" id="CHEBI:30616"/>
    </ligand>
</feature>
<accession>A7MSY3</accession>
<name>AROK_VIBC1</name>
<comment type="function">
    <text evidence="1">Catalyzes the specific phosphorylation of the 3-hydroxyl group of shikimic acid using ATP as a cosubstrate.</text>
</comment>
<comment type="catalytic activity">
    <reaction evidence="1">
        <text>shikimate + ATP = 3-phosphoshikimate + ADP + H(+)</text>
        <dbReference type="Rhea" id="RHEA:13121"/>
        <dbReference type="ChEBI" id="CHEBI:15378"/>
        <dbReference type="ChEBI" id="CHEBI:30616"/>
        <dbReference type="ChEBI" id="CHEBI:36208"/>
        <dbReference type="ChEBI" id="CHEBI:145989"/>
        <dbReference type="ChEBI" id="CHEBI:456216"/>
        <dbReference type="EC" id="2.7.1.71"/>
    </reaction>
</comment>
<comment type="cofactor">
    <cofactor evidence="1">
        <name>Mg(2+)</name>
        <dbReference type="ChEBI" id="CHEBI:18420"/>
    </cofactor>
    <text evidence="1">Binds 1 Mg(2+) ion per subunit.</text>
</comment>
<comment type="pathway">
    <text evidence="1">Metabolic intermediate biosynthesis; chorismate biosynthesis; chorismate from D-erythrose 4-phosphate and phosphoenolpyruvate: step 5/7.</text>
</comment>
<comment type="subunit">
    <text evidence="1">Monomer.</text>
</comment>
<comment type="subcellular location">
    <subcellularLocation>
        <location evidence="1">Cytoplasm</location>
    </subcellularLocation>
</comment>
<comment type="similarity">
    <text evidence="1">Belongs to the shikimate kinase family.</text>
</comment>
<dbReference type="EC" id="2.7.1.71" evidence="1"/>
<dbReference type="EMBL" id="CP000789">
    <property type="protein sequence ID" value="ABU69088.1"/>
    <property type="molecule type" value="Genomic_DNA"/>
</dbReference>
<dbReference type="RefSeq" id="WP_010443904.1">
    <property type="nucleotide sequence ID" value="NC_022269.1"/>
</dbReference>
<dbReference type="SMR" id="A7MSY3"/>
<dbReference type="GeneID" id="67376059"/>
<dbReference type="KEGG" id="vha:VIBHAR_00028"/>
<dbReference type="PATRIC" id="fig|338187.25.peg.2495"/>
<dbReference type="UniPathway" id="UPA00053">
    <property type="reaction ID" value="UER00088"/>
</dbReference>
<dbReference type="Proteomes" id="UP000008152">
    <property type="component" value="Chromosome I"/>
</dbReference>
<dbReference type="GO" id="GO:0005829">
    <property type="term" value="C:cytosol"/>
    <property type="evidence" value="ECO:0007669"/>
    <property type="project" value="TreeGrafter"/>
</dbReference>
<dbReference type="GO" id="GO:0005524">
    <property type="term" value="F:ATP binding"/>
    <property type="evidence" value="ECO:0007669"/>
    <property type="project" value="UniProtKB-UniRule"/>
</dbReference>
<dbReference type="GO" id="GO:0000287">
    <property type="term" value="F:magnesium ion binding"/>
    <property type="evidence" value="ECO:0007669"/>
    <property type="project" value="UniProtKB-UniRule"/>
</dbReference>
<dbReference type="GO" id="GO:0004765">
    <property type="term" value="F:shikimate kinase activity"/>
    <property type="evidence" value="ECO:0007669"/>
    <property type="project" value="UniProtKB-UniRule"/>
</dbReference>
<dbReference type="GO" id="GO:0008652">
    <property type="term" value="P:amino acid biosynthetic process"/>
    <property type="evidence" value="ECO:0007669"/>
    <property type="project" value="UniProtKB-KW"/>
</dbReference>
<dbReference type="GO" id="GO:0009073">
    <property type="term" value="P:aromatic amino acid family biosynthetic process"/>
    <property type="evidence" value="ECO:0007669"/>
    <property type="project" value="UniProtKB-KW"/>
</dbReference>
<dbReference type="GO" id="GO:0009423">
    <property type="term" value="P:chorismate biosynthetic process"/>
    <property type="evidence" value="ECO:0007669"/>
    <property type="project" value="UniProtKB-UniRule"/>
</dbReference>
<dbReference type="CDD" id="cd00464">
    <property type="entry name" value="SK"/>
    <property type="match status" value="1"/>
</dbReference>
<dbReference type="FunFam" id="3.40.50.300:FF:000099">
    <property type="entry name" value="Shikimate kinase 1"/>
    <property type="match status" value="1"/>
</dbReference>
<dbReference type="Gene3D" id="3.40.50.300">
    <property type="entry name" value="P-loop containing nucleotide triphosphate hydrolases"/>
    <property type="match status" value="1"/>
</dbReference>
<dbReference type="HAMAP" id="MF_00109">
    <property type="entry name" value="Shikimate_kinase"/>
    <property type="match status" value="1"/>
</dbReference>
<dbReference type="InterPro" id="IPR027417">
    <property type="entry name" value="P-loop_NTPase"/>
</dbReference>
<dbReference type="InterPro" id="IPR031322">
    <property type="entry name" value="Shikimate/glucono_kinase"/>
</dbReference>
<dbReference type="InterPro" id="IPR000623">
    <property type="entry name" value="Shikimate_kinase/TSH1"/>
</dbReference>
<dbReference type="InterPro" id="IPR023000">
    <property type="entry name" value="Shikimate_kinase_CS"/>
</dbReference>
<dbReference type="NCBIfam" id="NF003456">
    <property type="entry name" value="PRK05057.1"/>
    <property type="match status" value="1"/>
</dbReference>
<dbReference type="PANTHER" id="PTHR21087">
    <property type="entry name" value="SHIKIMATE KINASE"/>
    <property type="match status" value="1"/>
</dbReference>
<dbReference type="PANTHER" id="PTHR21087:SF16">
    <property type="entry name" value="SHIKIMATE KINASE 1, CHLOROPLASTIC"/>
    <property type="match status" value="1"/>
</dbReference>
<dbReference type="Pfam" id="PF01202">
    <property type="entry name" value="SKI"/>
    <property type="match status" value="1"/>
</dbReference>
<dbReference type="PRINTS" id="PR01100">
    <property type="entry name" value="SHIKIMTKNASE"/>
</dbReference>
<dbReference type="SUPFAM" id="SSF52540">
    <property type="entry name" value="P-loop containing nucleoside triphosphate hydrolases"/>
    <property type="match status" value="1"/>
</dbReference>
<dbReference type="PROSITE" id="PS01128">
    <property type="entry name" value="SHIKIMATE_KINASE"/>
    <property type="match status" value="1"/>
</dbReference>
<evidence type="ECO:0000255" key="1">
    <source>
        <dbReference type="HAMAP-Rule" id="MF_00109"/>
    </source>
</evidence>
<gene>
    <name evidence="1" type="primary">aroK</name>
    <name type="ordered locus">VIBHAR_00028</name>
</gene>
<sequence>MAEKRNIFLVGPMGAGKSTIGRHLAQQLHMEFVDSDTVIEERTGADIAWVFDVEGEEGFRKREEAVLEDLTQEQGIVLATGGGSVKSKENRNRLSARGVVVYLETTIEKQLARTNRDKKRPLLQTDNPREVLESLAGERNPLYEEVADYTVRTDDQSAKVVANQIVKMLEER</sequence>